<accession>Q61QN4</accession>
<accession>A8X3F5</accession>
<accession>E3CTZ4</accession>
<proteinExistence type="inferred from homology"/>
<keyword id="KW-0963">Cytoplasm</keyword>
<keyword id="KW-0206">Cytoskeleton</keyword>
<keyword id="KW-0493">Microtubule</keyword>
<keyword id="KW-1185">Reference proteome</keyword>
<evidence type="ECO:0000250" key="1"/>
<evidence type="ECO:0000256" key="2">
    <source>
        <dbReference type="SAM" id="MobiDB-lite"/>
    </source>
</evidence>
<evidence type="ECO:0000305" key="3"/>
<feature type="chain" id="PRO_0000272280" description="Protein CLASP-3">
    <location>
        <begin position="1"/>
        <end position="970"/>
    </location>
</feature>
<feature type="repeat" description="HEAT">
    <location>
        <begin position="905"/>
        <end position="943"/>
    </location>
</feature>
<feature type="region of interest" description="Disordered" evidence="2">
    <location>
        <begin position="314"/>
        <end position="377"/>
    </location>
</feature>
<feature type="region of interest" description="Disordered" evidence="2">
    <location>
        <begin position="651"/>
        <end position="675"/>
    </location>
</feature>
<feature type="compositionally biased region" description="Polar residues" evidence="2">
    <location>
        <begin position="344"/>
        <end position="355"/>
    </location>
</feature>
<gene>
    <name type="primary">cls-3</name>
    <name type="ORF">CBG06947</name>
</gene>
<protein>
    <recommendedName>
        <fullName>Protein CLASP-3</fullName>
    </recommendedName>
</protein>
<dbReference type="EMBL" id="HE601347">
    <property type="protein sequence ID" value="CBX33041.1"/>
    <property type="molecule type" value="Genomic_DNA"/>
</dbReference>
<dbReference type="FunCoup" id="Q61QN4">
    <property type="interactions" value="2517"/>
</dbReference>
<dbReference type="STRING" id="6238.Q61QN4"/>
<dbReference type="WormBase" id="CBG06947">
    <property type="protein sequence ID" value="CBP44680"/>
    <property type="gene ID" value="WBGene00029132"/>
    <property type="gene designation" value="Cbr-cls-3"/>
</dbReference>
<dbReference type="eggNOG" id="KOG2956">
    <property type="taxonomic scope" value="Eukaryota"/>
</dbReference>
<dbReference type="HOGENOM" id="CLU_005060_1_0_1"/>
<dbReference type="InParanoid" id="Q61QN4"/>
<dbReference type="OMA" id="LEVYAVF"/>
<dbReference type="Proteomes" id="UP000008549">
    <property type="component" value="Unassembled WGS sequence"/>
</dbReference>
<dbReference type="GO" id="GO:0045180">
    <property type="term" value="C:basal cortex"/>
    <property type="evidence" value="ECO:0000318"/>
    <property type="project" value="GO_Central"/>
</dbReference>
<dbReference type="GO" id="GO:0005881">
    <property type="term" value="C:cytoplasmic microtubule"/>
    <property type="evidence" value="ECO:0000318"/>
    <property type="project" value="GO_Central"/>
</dbReference>
<dbReference type="GO" id="GO:0000776">
    <property type="term" value="C:kinetochore"/>
    <property type="evidence" value="ECO:0000318"/>
    <property type="project" value="GO_Central"/>
</dbReference>
<dbReference type="GO" id="GO:0005815">
    <property type="term" value="C:microtubule organizing center"/>
    <property type="evidence" value="ECO:0000318"/>
    <property type="project" value="GO_Central"/>
</dbReference>
<dbReference type="GO" id="GO:0072686">
    <property type="term" value="C:mitotic spindle"/>
    <property type="evidence" value="ECO:0000318"/>
    <property type="project" value="GO_Central"/>
</dbReference>
<dbReference type="GO" id="GO:0005876">
    <property type="term" value="C:spindle microtubule"/>
    <property type="evidence" value="ECO:0000318"/>
    <property type="project" value="GO_Central"/>
</dbReference>
<dbReference type="GO" id="GO:0008017">
    <property type="term" value="F:microtubule binding"/>
    <property type="evidence" value="ECO:0000318"/>
    <property type="project" value="GO_Central"/>
</dbReference>
<dbReference type="GO" id="GO:0040001">
    <property type="term" value="P:establishment of mitotic spindle localization"/>
    <property type="evidence" value="ECO:0000318"/>
    <property type="project" value="GO_Central"/>
</dbReference>
<dbReference type="GO" id="GO:0090307">
    <property type="term" value="P:mitotic spindle assembly"/>
    <property type="evidence" value="ECO:0000318"/>
    <property type="project" value="GO_Central"/>
</dbReference>
<dbReference type="FunFam" id="1.25.10.10:FF:000607">
    <property type="entry name" value="Protein CLASP-2"/>
    <property type="match status" value="1"/>
</dbReference>
<dbReference type="Gene3D" id="1.25.10.10">
    <property type="entry name" value="Leucine-rich Repeat Variant"/>
    <property type="match status" value="3"/>
</dbReference>
<dbReference type="InterPro" id="IPR011989">
    <property type="entry name" value="ARM-like"/>
</dbReference>
<dbReference type="InterPro" id="IPR016024">
    <property type="entry name" value="ARM-type_fold"/>
</dbReference>
<dbReference type="InterPro" id="IPR024395">
    <property type="entry name" value="CLASP_N_dom"/>
</dbReference>
<dbReference type="InterPro" id="IPR034085">
    <property type="entry name" value="TOG"/>
</dbReference>
<dbReference type="PANTHER" id="PTHR21567">
    <property type="entry name" value="CLASP"/>
    <property type="match status" value="1"/>
</dbReference>
<dbReference type="PANTHER" id="PTHR21567:SF34">
    <property type="entry name" value="PROTEIN CLASP-3"/>
    <property type="match status" value="1"/>
</dbReference>
<dbReference type="Pfam" id="PF12348">
    <property type="entry name" value="CLASP_N"/>
    <property type="match status" value="1"/>
</dbReference>
<dbReference type="SMART" id="SM01349">
    <property type="entry name" value="TOG"/>
    <property type="match status" value="2"/>
</dbReference>
<dbReference type="SUPFAM" id="SSF48371">
    <property type="entry name" value="ARM repeat"/>
    <property type="match status" value="1"/>
</dbReference>
<organism>
    <name type="scientific">Caenorhabditis briggsae</name>
    <dbReference type="NCBI Taxonomy" id="6238"/>
    <lineage>
        <taxon>Eukaryota</taxon>
        <taxon>Metazoa</taxon>
        <taxon>Ecdysozoa</taxon>
        <taxon>Nematoda</taxon>
        <taxon>Chromadorea</taxon>
        <taxon>Rhabditida</taxon>
        <taxon>Rhabditina</taxon>
        <taxon>Rhabditomorpha</taxon>
        <taxon>Rhabditoidea</taxon>
        <taxon>Rhabditidae</taxon>
        <taxon>Peloderinae</taxon>
        <taxon>Caenorhabditis</taxon>
    </lineage>
</organism>
<comment type="function">
    <text evidence="1">Microtubule plus-end tracking protein that promotes the stabilization of dynamic microtubules.</text>
</comment>
<comment type="subcellular location">
    <subcellularLocation>
        <location evidence="1">Cytoplasm</location>
        <location evidence="1">Cytoskeleton</location>
    </subcellularLocation>
</comment>
<comment type="similarity">
    <text evidence="3">Belongs to the CLASP family.</text>
</comment>
<sequence length="970" mass="107506">MTSRIQPKSGGYLLSKSDFTKVFEDVPKIAITSSVDLRNKFDNVKTILSNTSEDWNKRQTQLKTIRSLIINGEKLVDRPTMIAHILQLLGCFELAVKDLRSQILREAAITCSFIVSKYGIETHSIGEDILIPAMGQVAVSTKIMATSASTLTEFIVEYIQTRQVFTILSSFSTSKDKNQRRQLAVLLEIIIGKWSDRLKKQIIRQICELVKSAINDADSETRAAGRRAFAKLEEFHSEEADALFLELENSKQKMLRGGDAASSWASINSDKGSIPIRSKLSAGAKGYSNISAKFLAQRSASAIDPKALKVTGPSRLARPLSTKAMVRQDTSPAGSKIPYPNRPGSRTRTSSITSNDSRDTSPTRRHSPLPPDTQKARVKYGNGSFFAKLGMSDNTDDDEFLLPIRVRSPQKPNLGDSPADNVSRVLKECCSSSVTEKKDGIKKLLPIVSDTTLSSTEIKNIGNCLNRLLSDASNTKLILQMVLEVYAVFIRTHSSRLSEWLRLALAKLFARKATETLPNTKKQINHTLNVILECFNAHHQLVTVCELMCDPIHLMVPKARVALLEYMTSLLDEYTEPGASINHKELKAALRKMFTWIGDQRQSILLTPYIEKAICSMFCVNVADFSALISEFDSDQKAWLHQTLQLNGLENGISSGSGGSGNNHPKATPLRETPHKNDSVVLPEFGSAQKRTAINLGSFNTSTNAALSKLEEQSTSRLMEKMNLNSTVTLPPDTLEKIQNVQDLLHKMRVSKDPDEQENAISQVYMKICDGGFGIWEQCYAKLLLNLFEILSTSRSENNKKMCLRILGKMCTAQAAKLFDSTEMAVCKVLDAAVNTNDATTALAVDDCLRTLATHLPLANIINIAKVILIQEPIDDERASLVLKMVTRLFEELPADELKNVVDDITPCVIKAYQSTSSSVRKTVVYCLVAMVNRVGEQRMAPHFTKLPKAMTNLIQVYVNRAISTSLPRL</sequence>
<name>CLAP3_CAEBR</name>
<reference key="1">
    <citation type="journal article" date="2003" name="PLoS Biol.">
        <title>The genome sequence of Caenorhabditis briggsae: a platform for comparative genomics.</title>
        <authorList>
            <person name="Stein L.D."/>
            <person name="Bao Z."/>
            <person name="Blasiar D."/>
            <person name="Blumenthal T."/>
            <person name="Brent M.R."/>
            <person name="Chen N."/>
            <person name="Chinwalla A."/>
            <person name="Clarke L."/>
            <person name="Clee C."/>
            <person name="Coghlan A."/>
            <person name="Coulson A."/>
            <person name="D'Eustachio P."/>
            <person name="Fitch D.H.A."/>
            <person name="Fulton L.A."/>
            <person name="Fulton R.E."/>
            <person name="Griffiths-Jones S."/>
            <person name="Harris T.W."/>
            <person name="Hillier L.W."/>
            <person name="Kamath R."/>
            <person name="Kuwabara P.E."/>
            <person name="Mardis E.R."/>
            <person name="Marra M.A."/>
            <person name="Miner T.L."/>
            <person name="Minx P."/>
            <person name="Mullikin J.C."/>
            <person name="Plumb R.W."/>
            <person name="Rogers J."/>
            <person name="Schein J.E."/>
            <person name="Sohrmann M."/>
            <person name="Spieth J."/>
            <person name="Stajich J.E."/>
            <person name="Wei C."/>
            <person name="Willey D."/>
            <person name="Wilson R.K."/>
            <person name="Durbin R.M."/>
            <person name="Waterston R.H."/>
        </authorList>
    </citation>
    <scope>NUCLEOTIDE SEQUENCE [LARGE SCALE GENOMIC DNA]</scope>
    <source>
        <strain>AF16</strain>
    </source>
</reference>